<protein>
    <recommendedName>
        <fullName evidence="1">UPF0303 protein Smed_2872</fullName>
    </recommendedName>
</protein>
<proteinExistence type="inferred from homology"/>
<gene>
    <name type="ordered locus">Smed_2872</name>
</gene>
<comment type="similarity">
    <text evidence="1">Belongs to the UPF0303 family.</text>
</comment>
<feature type="chain" id="PRO_1000046753" description="UPF0303 protein Smed_2872">
    <location>
        <begin position="1"/>
        <end position="164"/>
    </location>
</feature>
<sequence length="164" mass="18187">MNIDNDLRRIALQEQQLQFERFDLDTAWKLGVTLRRMAAERKLGCVIDITLFSMQVFYAALDGATPDNPNWVRRKRNTVFRLFKSSYATGLSLLKQQTNLQAKLGLADAEFAAHGGSFPIVVKGTGCIGAVTVSGLPQRDDHNLVVEALAELLGANHDELKLES</sequence>
<dbReference type="EMBL" id="CP000738">
    <property type="protein sequence ID" value="ABR61702.1"/>
    <property type="molecule type" value="Genomic_DNA"/>
</dbReference>
<dbReference type="RefSeq" id="WP_012067085.1">
    <property type="nucleotide sequence ID" value="NC_009636.1"/>
</dbReference>
<dbReference type="RefSeq" id="YP_001328537.1">
    <property type="nucleotide sequence ID" value="NC_009636.1"/>
</dbReference>
<dbReference type="SMR" id="A6UDH2"/>
<dbReference type="STRING" id="366394.Smed_2872"/>
<dbReference type="KEGG" id="smd:Smed_2872"/>
<dbReference type="PATRIC" id="fig|366394.8.peg.6085"/>
<dbReference type="eggNOG" id="COG4702">
    <property type="taxonomic scope" value="Bacteria"/>
</dbReference>
<dbReference type="HOGENOM" id="CLU_101036_2_1_5"/>
<dbReference type="OrthoDB" id="9815315at2"/>
<dbReference type="Proteomes" id="UP000001108">
    <property type="component" value="Chromosome"/>
</dbReference>
<dbReference type="Gene3D" id="3.30.450.150">
    <property type="entry name" value="Haem-degrading domain"/>
    <property type="match status" value="1"/>
</dbReference>
<dbReference type="HAMAP" id="MF_00761">
    <property type="entry name" value="UPF0303"/>
    <property type="match status" value="1"/>
</dbReference>
<dbReference type="InterPro" id="IPR005624">
    <property type="entry name" value="PduO/GlcC-like"/>
</dbReference>
<dbReference type="InterPro" id="IPR038084">
    <property type="entry name" value="PduO/GlcC-like_sf"/>
</dbReference>
<dbReference type="InterPro" id="IPR010371">
    <property type="entry name" value="YBR137W-like"/>
</dbReference>
<dbReference type="NCBIfam" id="NF002696">
    <property type="entry name" value="PRK02487.1-5"/>
    <property type="match status" value="1"/>
</dbReference>
<dbReference type="PANTHER" id="PTHR28255">
    <property type="match status" value="1"/>
</dbReference>
<dbReference type="PANTHER" id="PTHR28255:SF1">
    <property type="entry name" value="UPF0303 PROTEIN YBR137W"/>
    <property type="match status" value="1"/>
</dbReference>
<dbReference type="Pfam" id="PF03928">
    <property type="entry name" value="HbpS-like"/>
    <property type="match status" value="1"/>
</dbReference>
<dbReference type="PIRSF" id="PIRSF008757">
    <property type="entry name" value="UCP008757"/>
    <property type="match status" value="1"/>
</dbReference>
<dbReference type="SUPFAM" id="SSF143744">
    <property type="entry name" value="GlcG-like"/>
    <property type="match status" value="1"/>
</dbReference>
<organism>
    <name type="scientific">Sinorhizobium medicae (strain WSM419)</name>
    <name type="common">Ensifer medicae</name>
    <dbReference type="NCBI Taxonomy" id="366394"/>
    <lineage>
        <taxon>Bacteria</taxon>
        <taxon>Pseudomonadati</taxon>
        <taxon>Pseudomonadota</taxon>
        <taxon>Alphaproteobacteria</taxon>
        <taxon>Hyphomicrobiales</taxon>
        <taxon>Rhizobiaceae</taxon>
        <taxon>Sinorhizobium/Ensifer group</taxon>
        <taxon>Sinorhizobium</taxon>
    </lineage>
</organism>
<reference key="1">
    <citation type="submission" date="2007-06" db="EMBL/GenBank/DDBJ databases">
        <title>Complete sequence of Sinorhizobium medicae WSM419 chromosome.</title>
        <authorList>
            <consortium name="US DOE Joint Genome Institute"/>
            <person name="Copeland A."/>
            <person name="Lucas S."/>
            <person name="Lapidus A."/>
            <person name="Barry K."/>
            <person name="Glavina del Rio T."/>
            <person name="Dalin E."/>
            <person name="Tice H."/>
            <person name="Pitluck S."/>
            <person name="Chain P."/>
            <person name="Malfatti S."/>
            <person name="Shin M."/>
            <person name="Vergez L."/>
            <person name="Schmutz J."/>
            <person name="Larimer F."/>
            <person name="Land M."/>
            <person name="Hauser L."/>
            <person name="Kyrpides N."/>
            <person name="Mikhailova N."/>
            <person name="Reeve W.G."/>
            <person name="Richardson P."/>
        </authorList>
    </citation>
    <scope>NUCLEOTIDE SEQUENCE [LARGE SCALE GENOMIC DNA]</scope>
    <source>
        <strain>WSM419</strain>
    </source>
</reference>
<accession>A6UDH2</accession>
<evidence type="ECO:0000255" key="1">
    <source>
        <dbReference type="HAMAP-Rule" id="MF_00761"/>
    </source>
</evidence>
<name>Y2872_SINMW</name>